<evidence type="ECO:0000250" key="1"/>
<evidence type="ECO:0000255" key="2">
    <source>
        <dbReference type="HAMAP-Rule" id="MF_01356"/>
    </source>
</evidence>
<reference key="1">
    <citation type="journal article" date="2004" name="Proc. Natl. Acad. Sci. U.S.A.">
        <title>Structural flexibility in the Burkholderia mallei genome.</title>
        <authorList>
            <person name="Nierman W.C."/>
            <person name="DeShazer D."/>
            <person name="Kim H.S."/>
            <person name="Tettelin H."/>
            <person name="Nelson K.E."/>
            <person name="Feldblyum T.V."/>
            <person name="Ulrich R.L."/>
            <person name="Ronning C.M."/>
            <person name="Brinkac L.M."/>
            <person name="Daugherty S.C."/>
            <person name="Davidsen T.D."/>
            <person name="DeBoy R.T."/>
            <person name="Dimitrov G."/>
            <person name="Dodson R.J."/>
            <person name="Durkin A.S."/>
            <person name="Gwinn M.L."/>
            <person name="Haft D.H."/>
            <person name="Khouri H.M."/>
            <person name="Kolonay J.F."/>
            <person name="Madupu R."/>
            <person name="Mohammoud Y."/>
            <person name="Nelson W.C."/>
            <person name="Radune D."/>
            <person name="Romero C.M."/>
            <person name="Sarria S."/>
            <person name="Selengut J."/>
            <person name="Shamblin C."/>
            <person name="Sullivan S.A."/>
            <person name="White O."/>
            <person name="Yu Y."/>
            <person name="Zafar N."/>
            <person name="Zhou L."/>
            <person name="Fraser C.M."/>
        </authorList>
    </citation>
    <scope>NUCLEOTIDE SEQUENCE [LARGE SCALE GENOMIC DNA]</scope>
    <source>
        <strain>ATCC 23344</strain>
    </source>
</reference>
<organism>
    <name type="scientific">Burkholderia mallei (strain ATCC 23344)</name>
    <dbReference type="NCBI Taxonomy" id="243160"/>
    <lineage>
        <taxon>Bacteria</taxon>
        <taxon>Pseudomonadati</taxon>
        <taxon>Pseudomonadota</taxon>
        <taxon>Betaproteobacteria</taxon>
        <taxon>Burkholderiales</taxon>
        <taxon>Burkholderiaceae</taxon>
        <taxon>Burkholderia</taxon>
        <taxon>pseudomallei group</taxon>
    </lineage>
</organism>
<dbReference type="EC" id="7.1.1.-" evidence="2"/>
<dbReference type="EMBL" id="CP000011">
    <property type="protein sequence ID" value="AAU46910.1"/>
    <property type="molecule type" value="Genomic_DNA"/>
</dbReference>
<dbReference type="RefSeq" id="WP_004186860.1">
    <property type="nucleotide sequence ID" value="NC_006349.2"/>
</dbReference>
<dbReference type="RefSeq" id="YP_105287.1">
    <property type="nucleotide sequence ID" value="NC_006349.2"/>
</dbReference>
<dbReference type="SMR" id="Q62DE1"/>
<dbReference type="KEGG" id="bma:BMAA0517"/>
<dbReference type="PATRIC" id="fig|243160.12.peg.4029"/>
<dbReference type="eggNOG" id="COG0377">
    <property type="taxonomic scope" value="Bacteria"/>
</dbReference>
<dbReference type="HOGENOM" id="CLU_055737_7_0_4"/>
<dbReference type="Proteomes" id="UP000006693">
    <property type="component" value="Chromosome 2"/>
</dbReference>
<dbReference type="GO" id="GO:0005886">
    <property type="term" value="C:plasma membrane"/>
    <property type="evidence" value="ECO:0007669"/>
    <property type="project" value="UniProtKB-SubCell"/>
</dbReference>
<dbReference type="GO" id="GO:0045271">
    <property type="term" value="C:respiratory chain complex I"/>
    <property type="evidence" value="ECO:0007669"/>
    <property type="project" value="TreeGrafter"/>
</dbReference>
<dbReference type="GO" id="GO:0051539">
    <property type="term" value="F:4 iron, 4 sulfur cluster binding"/>
    <property type="evidence" value="ECO:0007669"/>
    <property type="project" value="UniProtKB-KW"/>
</dbReference>
<dbReference type="GO" id="GO:0005506">
    <property type="term" value="F:iron ion binding"/>
    <property type="evidence" value="ECO:0007669"/>
    <property type="project" value="UniProtKB-UniRule"/>
</dbReference>
<dbReference type="GO" id="GO:0008137">
    <property type="term" value="F:NADH dehydrogenase (ubiquinone) activity"/>
    <property type="evidence" value="ECO:0007669"/>
    <property type="project" value="InterPro"/>
</dbReference>
<dbReference type="GO" id="GO:0050136">
    <property type="term" value="F:NADH:ubiquinone reductase (non-electrogenic) activity"/>
    <property type="evidence" value="ECO:0007669"/>
    <property type="project" value="UniProtKB-UniRule"/>
</dbReference>
<dbReference type="GO" id="GO:0048038">
    <property type="term" value="F:quinone binding"/>
    <property type="evidence" value="ECO:0007669"/>
    <property type="project" value="UniProtKB-KW"/>
</dbReference>
<dbReference type="GO" id="GO:0009060">
    <property type="term" value="P:aerobic respiration"/>
    <property type="evidence" value="ECO:0007669"/>
    <property type="project" value="TreeGrafter"/>
</dbReference>
<dbReference type="GO" id="GO:0015990">
    <property type="term" value="P:electron transport coupled proton transport"/>
    <property type="evidence" value="ECO:0007669"/>
    <property type="project" value="TreeGrafter"/>
</dbReference>
<dbReference type="FunFam" id="3.40.50.12280:FF:000001">
    <property type="entry name" value="NADH-quinone oxidoreductase subunit B 2"/>
    <property type="match status" value="1"/>
</dbReference>
<dbReference type="Gene3D" id="3.40.50.12280">
    <property type="match status" value="1"/>
</dbReference>
<dbReference type="HAMAP" id="MF_01356">
    <property type="entry name" value="NDH1_NuoB"/>
    <property type="match status" value="1"/>
</dbReference>
<dbReference type="InterPro" id="IPR006137">
    <property type="entry name" value="NADH_UbQ_OxRdtase-like_20kDa"/>
</dbReference>
<dbReference type="InterPro" id="IPR006138">
    <property type="entry name" value="NADH_UQ_OxRdtase_20Kd_su"/>
</dbReference>
<dbReference type="NCBIfam" id="TIGR01957">
    <property type="entry name" value="nuoB_fam"/>
    <property type="match status" value="1"/>
</dbReference>
<dbReference type="NCBIfam" id="NF005012">
    <property type="entry name" value="PRK06411.1"/>
    <property type="match status" value="1"/>
</dbReference>
<dbReference type="PANTHER" id="PTHR11995">
    <property type="entry name" value="NADH DEHYDROGENASE"/>
    <property type="match status" value="1"/>
</dbReference>
<dbReference type="PANTHER" id="PTHR11995:SF14">
    <property type="entry name" value="NADH DEHYDROGENASE [UBIQUINONE] IRON-SULFUR PROTEIN 7, MITOCHONDRIAL"/>
    <property type="match status" value="1"/>
</dbReference>
<dbReference type="Pfam" id="PF01058">
    <property type="entry name" value="Oxidored_q6"/>
    <property type="match status" value="1"/>
</dbReference>
<dbReference type="SUPFAM" id="SSF56770">
    <property type="entry name" value="HydA/Nqo6-like"/>
    <property type="match status" value="1"/>
</dbReference>
<dbReference type="PROSITE" id="PS01150">
    <property type="entry name" value="COMPLEX1_20K"/>
    <property type="match status" value="1"/>
</dbReference>
<comment type="function">
    <text evidence="1">NDH-1 shuttles electrons from NADH, via FMN and iron-sulfur (Fe-S) centers, to quinones in the respiratory chain. Couples the redox reaction to proton translocation (for every two electrons transferred, four hydrogen ions are translocated across the cytoplasmic membrane), and thus conserves the redox energy in a proton gradient (By similarity).</text>
</comment>
<comment type="catalytic activity">
    <reaction evidence="2">
        <text>a quinone + NADH + 5 H(+)(in) = a quinol + NAD(+) + 4 H(+)(out)</text>
        <dbReference type="Rhea" id="RHEA:57888"/>
        <dbReference type="ChEBI" id="CHEBI:15378"/>
        <dbReference type="ChEBI" id="CHEBI:24646"/>
        <dbReference type="ChEBI" id="CHEBI:57540"/>
        <dbReference type="ChEBI" id="CHEBI:57945"/>
        <dbReference type="ChEBI" id="CHEBI:132124"/>
    </reaction>
</comment>
<comment type="cofactor">
    <cofactor evidence="2">
        <name>[4Fe-4S] cluster</name>
        <dbReference type="ChEBI" id="CHEBI:49883"/>
    </cofactor>
    <text evidence="2">Binds 1 [4Fe-4S] cluster.</text>
</comment>
<comment type="subunit">
    <text evidence="2">NDH-1 is composed of 14 different subunits. Subunits NuoB, C, D, E, F, and G constitute the peripheral sector of the complex.</text>
</comment>
<comment type="subcellular location">
    <subcellularLocation>
        <location evidence="2">Cell inner membrane</location>
        <topology evidence="2">Peripheral membrane protein</topology>
        <orientation evidence="2">Cytoplasmic side</orientation>
    </subcellularLocation>
</comment>
<comment type="similarity">
    <text evidence="2">Belongs to the complex I 20 kDa subunit family.</text>
</comment>
<protein>
    <recommendedName>
        <fullName evidence="2">NADH-quinone oxidoreductase subunit B 2</fullName>
        <ecNumber evidence="2">7.1.1.-</ecNumber>
    </recommendedName>
    <alternativeName>
        <fullName evidence="2">NADH dehydrogenase I subunit B 2</fullName>
    </alternativeName>
    <alternativeName>
        <fullName evidence="2">NDH-1 subunit B 2</fullName>
    </alternativeName>
</protein>
<feature type="chain" id="PRO_0000358370" description="NADH-quinone oxidoreductase subunit B 2">
    <location>
        <begin position="1"/>
        <end position="167"/>
    </location>
</feature>
<feature type="binding site" evidence="2">
    <location>
        <position position="39"/>
    </location>
    <ligand>
        <name>[4Fe-4S] cluster</name>
        <dbReference type="ChEBI" id="CHEBI:49883"/>
    </ligand>
</feature>
<feature type="binding site" evidence="2">
    <location>
        <position position="40"/>
    </location>
    <ligand>
        <name>[4Fe-4S] cluster</name>
        <dbReference type="ChEBI" id="CHEBI:49883"/>
    </ligand>
</feature>
<feature type="binding site" evidence="2">
    <location>
        <position position="104"/>
    </location>
    <ligand>
        <name>[4Fe-4S] cluster</name>
        <dbReference type="ChEBI" id="CHEBI:49883"/>
    </ligand>
</feature>
<feature type="binding site" evidence="2">
    <location>
        <position position="134"/>
    </location>
    <ligand>
        <name>[4Fe-4S] cluster</name>
        <dbReference type="ChEBI" id="CHEBI:49883"/>
    </ligand>
</feature>
<gene>
    <name evidence="2" type="primary">nuoB2</name>
    <name type="ordered locus">BMAA0517</name>
</gene>
<sequence length="167" mass="18469">MANHPLTLEKDGFIVTTLDAAMAAAQKNSLWYMTFGLACCAVEMMHAAGARYDMDRFGMIPRASPRQCDLMIVAGTLTNKMAPAMRRVYDQMAEPRYVVSMGSCANGGGYYHYSYSVVRGCDRIVPVDVYVPGCPPTAEALVYGLMQLQRKVAERSTHSRPKLFARP</sequence>
<proteinExistence type="inferred from homology"/>
<name>NUOB2_BURMA</name>
<accession>Q62DE1</accession>
<keyword id="KW-0004">4Fe-4S</keyword>
<keyword id="KW-0997">Cell inner membrane</keyword>
<keyword id="KW-1003">Cell membrane</keyword>
<keyword id="KW-0408">Iron</keyword>
<keyword id="KW-0411">Iron-sulfur</keyword>
<keyword id="KW-0472">Membrane</keyword>
<keyword id="KW-0479">Metal-binding</keyword>
<keyword id="KW-0520">NAD</keyword>
<keyword id="KW-0874">Quinone</keyword>
<keyword id="KW-1185">Reference proteome</keyword>
<keyword id="KW-1278">Translocase</keyword>
<keyword id="KW-0813">Transport</keyword>
<keyword id="KW-0830">Ubiquinone</keyword>